<feature type="chain" id="PRO_0000458269" description="Phenylalanine aminomutase (L-beta-phenylalanine forming)">
    <location>
        <begin position="1"/>
        <end position="703"/>
    </location>
</feature>
<feature type="active site" description="Proton donor/acceptor" evidence="1">
    <location>
        <position position="79"/>
    </location>
</feature>
<feature type="modified residue" description="2,3-didehydroalanine (Ser)" evidence="2">
    <location>
        <position position="178"/>
    </location>
</feature>
<feature type="cross-link" description="5-imidazolinone (Ala-Gly)" evidence="6">
    <location>
        <begin position="177"/>
        <end position="179"/>
    </location>
</feature>
<keyword id="KW-0413">Isomerase</keyword>
<keyword id="KW-1185">Reference proteome</keyword>
<keyword id="KW-0843">Virulence</keyword>
<sequence>MASQSAHLVKTHQLWELLRHRTKTGSYELDGDSLHIADVVATAQQTSTPRLSEDPKVIKGLQDSVDVLFDHLAKGWYVYGVNTGFGGSADSRTTEVIELQKALMQLTQTGILTTPSDGSAIPGHSTPFEWVRAAMVVRCNASLRGHSAVSLPIIKAIINLLVHGLTPVVPLRGTVSASGDLMPLAYVTGSIEGNPDTLLEKNGKVLPSPKALQEAGLAPVFLGPKEGLGLINGTASSAGLGALVVAQAHSLAFLTQVLTGGAVEALRGSSESFHPFIARARPHPGQIECARNIAYFLRGSHLSRDVLAPKDRRREDLAQDRYSLRSAPQWIGPQLEDLLLADQQISIELNSSCDNPLVDSETNDIYYGCNFQAAAVTSAMEKVRLAMQMFGRMLFAQSTEMIDVHLSGGLPANLAADNPSISFTMKGVDINMAAYMAELSYLANPMSSHVQAAEMHNQSVNSMAFASARISHDAIDVLTKMCACSVFTVCQALDLRALHMAFIADATKALASTIELKFSAKVEAGQLNSLQMLIQAHVTRAWGLTGKLDLHARCESLIDSALPIVLCHVAGDVADIIEWKTQAIEVVWNVWTNTFASFSAAPHTSQLLGAGSRLLYNFVRKTLGVPFHEGFVEHPTADSQTLHSRPKKTIGGWITIIHESIRRGSIYNELLALAEGLLSTKRTDGANGANCTLCHEMKGEIHV</sequence>
<accession>P9WEN6</accession>
<accession>A0A0U1LSP0</accession>
<comment type="function">
    <text evidence="3 4 7">Phenylalanine aminomutase; part of the gene cluster that mediates the biosynthesis of the mycotoxin cyclochlorotine, a hepatotoxic and carcinogenic cyclic chlorinated pentapeptide (PubMed:26954535, PubMed:33736433). Within the pathway, cctP1 provides the uncommon building block beta-Phe from Phe (PubMed:33736433). The NRPS cctN initially catalyzes the condensation of L-serine (Ser), Pro, L-2-aminobutyrate (2Abu), Ser, and beta-Phe in this order to produce isocyclotine. After the dichlorination of Pro2 catalyzed by cctP2 to produce isocyclochlorotine, the cctO-mediated transacylation of isocyclochlorotine can furnish cyclochlorotine. The subsequent hydroxylation of cyclochlorotine by cctR yields hydroxycyclochlorotine as the final product. CctP1 probably acts as a phenylalanine aminomutase and provides the uncommon building block beta-Phe. Furthermore, 2Abu can be synthesized from threonine by one of the threonine dehydratases and transaminases localized outside of the cluster. The functions of the remaining proteins encoded by the cluster, cctM and cctT, have not been identified yet (Probable) (PubMed:33736433).</text>
</comment>
<comment type="catalytic activity">
    <reaction evidence="7">
        <text>L-phenylalanine = L-beta-phenylalanine</text>
        <dbReference type="Rhea" id="RHEA:34395"/>
        <dbReference type="ChEBI" id="CHEBI:58095"/>
        <dbReference type="ChEBI" id="CHEBI:67158"/>
        <dbReference type="EC" id="5.4.3.10"/>
    </reaction>
</comment>
<comment type="pathway">
    <text evidence="4">Mycotoxin biosynthesis.</text>
</comment>
<comment type="PTM">
    <text evidence="6">Contains an active site 4-methylidene-imidazol-5-one (MIO), which is formed autocatalytically by cyclization and dehydration of residues Ala-Ser-Gly.</text>
</comment>
<comment type="disruption phenotype">
    <text evidence="4">Abolishes the production of cyclochlorotine.</text>
</comment>
<comment type="similarity">
    <text evidence="6">Belongs to the PAL/histidase family.</text>
</comment>
<comment type="sequence caution" evidence="4">
    <conflict type="erroneous gene model prediction">
        <sequence resource="EMBL-CDS" id="CRG85574"/>
    </conflict>
    <text>The predicted gene cctP/PISL3812_02621 has been split into 2 genes: cctP1 and cctP2.</text>
</comment>
<reference key="1">
    <citation type="journal article" date="2015" name="J. Biotechnol.">
        <title>Draft genome sequence of Talaromyces islandicus ('Penicillium islandicum') WF-38-12, a neglected mold with significant biotechnological potential.</title>
        <authorList>
            <person name="Schafhauser T."/>
            <person name="Wibberg D."/>
            <person name="Rueckert C."/>
            <person name="Winkler A."/>
            <person name="Flor L."/>
            <person name="van Pee K.-H."/>
            <person name="Fewer D.P."/>
            <person name="Sivonen K."/>
            <person name="Jahn L."/>
            <person name="Ludwig-Mueller J."/>
            <person name="Caradec T."/>
            <person name="Jacques P."/>
            <person name="Huijbers M.M.E."/>
            <person name="van Berkel W.J.H."/>
            <person name="Weber T."/>
            <person name="Wohlleben W."/>
            <person name="Kalinowski J."/>
        </authorList>
    </citation>
    <scope>NUCLEOTIDE SEQUENCE [LARGE SCALE GENOMIC DNA]</scope>
    <source>
        <strain>ATCC 26535 / WF-38-12</strain>
    </source>
</reference>
<reference key="2">
    <citation type="journal article" date="2016" name="Environ. Microbiol.">
        <title>The cyclochlorotine mycotoxin is produced by the nonribosomal peptide synthetase CctN in Talaromyces islandicus ('Penicillium islandicum').</title>
        <authorList>
            <person name="Schafhauser T."/>
            <person name="Kirchner N."/>
            <person name="Kulik A."/>
            <person name="Huijbers M.M."/>
            <person name="Flor L."/>
            <person name="Caradec T."/>
            <person name="Fewer D.P."/>
            <person name="Gross H."/>
            <person name="Jacques P."/>
            <person name="Jahn L."/>
            <person name="Jokela J."/>
            <person name="Leclere V."/>
            <person name="Ludwig-Mueller J."/>
            <person name="Sivonen K."/>
            <person name="van Berkel W.J."/>
            <person name="Weber T."/>
            <person name="Wohlleben W."/>
            <person name="van Pee K.H."/>
        </authorList>
    </citation>
    <scope>FUNCTION</scope>
</reference>
<reference key="3">
    <citation type="journal article" date="2021" name="Org. Lett.">
        <title>Biosynthesis of cyclochlorotine: identification of the genes involved in oxidative transformations and intramolecular O,N-transacylation.</title>
        <authorList>
            <person name="Jiang Y."/>
            <person name="Ozaki T."/>
            <person name="Liu C."/>
            <person name="Igarashi Y."/>
            <person name="Ye Y."/>
            <person name="Tang S."/>
            <person name="Ye T."/>
            <person name="Maruyama J.I."/>
            <person name="Minami A."/>
            <person name="Oikawa H."/>
        </authorList>
    </citation>
    <scope>FUNCTION</scope>
    <scope>DISRUPTION PHENOTYPE</scope>
    <scope>PATHWAY</scope>
</reference>
<proteinExistence type="inferred from homology"/>
<name>CCTP1_TALIS</name>
<protein>
    <recommendedName>
        <fullName evidence="5">Phenylalanine aminomutase (L-beta-phenylalanine forming)</fullName>
        <shortName evidence="5">PAM</shortName>
        <ecNumber evidence="7">5.4.3.10</ecNumber>
    </recommendedName>
    <alternativeName>
        <fullName evidence="5">Cyclochlorotine biosynthesis protein P1</fullName>
    </alternativeName>
</protein>
<gene>
    <name evidence="5" type="primary">cctP1</name>
    <name type="ORF">PISL3812_02621_1</name>
</gene>
<organism>
    <name type="scientific">Talaromyces islandicus</name>
    <name type="common">Penicillium islandicum</name>
    <dbReference type="NCBI Taxonomy" id="28573"/>
    <lineage>
        <taxon>Eukaryota</taxon>
        <taxon>Fungi</taxon>
        <taxon>Dikarya</taxon>
        <taxon>Ascomycota</taxon>
        <taxon>Pezizomycotina</taxon>
        <taxon>Eurotiomycetes</taxon>
        <taxon>Eurotiomycetidae</taxon>
        <taxon>Eurotiales</taxon>
        <taxon>Trichocomaceae</taxon>
        <taxon>Talaromyces</taxon>
        <taxon>Talaromyces sect. Islandici</taxon>
    </lineage>
</organism>
<dbReference type="EC" id="5.4.3.10" evidence="7"/>
<dbReference type="EMBL" id="CVMT01000002">
    <property type="protein sequence ID" value="CRG85574.1"/>
    <property type="status" value="ALT_SEQ"/>
    <property type="molecule type" value="Genomic_DNA"/>
</dbReference>
<dbReference type="SMR" id="P9WEN6"/>
<dbReference type="OrthoDB" id="10051290at2759"/>
<dbReference type="Proteomes" id="UP000054383">
    <property type="component" value="Unassembled WGS sequence"/>
</dbReference>
<dbReference type="GO" id="GO:0005737">
    <property type="term" value="C:cytoplasm"/>
    <property type="evidence" value="ECO:0007669"/>
    <property type="project" value="InterPro"/>
</dbReference>
<dbReference type="GO" id="GO:0016841">
    <property type="term" value="F:ammonia-lyase activity"/>
    <property type="evidence" value="ECO:0007669"/>
    <property type="project" value="InterPro"/>
</dbReference>
<dbReference type="GO" id="GO:0016853">
    <property type="term" value="F:isomerase activity"/>
    <property type="evidence" value="ECO:0007669"/>
    <property type="project" value="UniProtKB-KW"/>
</dbReference>
<dbReference type="GO" id="GO:0006559">
    <property type="term" value="P:L-phenylalanine catabolic process"/>
    <property type="evidence" value="ECO:0007669"/>
    <property type="project" value="InterPro"/>
</dbReference>
<dbReference type="CDD" id="cd00332">
    <property type="entry name" value="PAL-HAL"/>
    <property type="match status" value="1"/>
</dbReference>
<dbReference type="Gene3D" id="1.20.200.10">
    <property type="entry name" value="Fumarase/aspartase (Central domain)"/>
    <property type="match status" value="1"/>
</dbReference>
<dbReference type="Gene3D" id="1.10.275.10">
    <property type="entry name" value="Fumarase/aspartase (N-terminal domain)"/>
    <property type="match status" value="1"/>
</dbReference>
<dbReference type="Gene3D" id="1.10.274.20">
    <property type="entry name" value="Phenylalanine ammonia-lyase 1, domain 3"/>
    <property type="match status" value="1"/>
</dbReference>
<dbReference type="InterPro" id="IPR001106">
    <property type="entry name" value="Aromatic_Lyase"/>
</dbReference>
<dbReference type="InterPro" id="IPR024083">
    <property type="entry name" value="Fumarase/histidase_N"/>
</dbReference>
<dbReference type="InterPro" id="IPR008948">
    <property type="entry name" value="L-Aspartase-like"/>
</dbReference>
<dbReference type="InterPro" id="IPR022313">
    <property type="entry name" value="Phe/His_NH3-lyase_AS"/>
</dbReference>
<dbReference type="InterPro" id="IPR005922">
    <property type="entry name" value="Phe_NH3-lyase"/>
</dbReference>
<dbReference type="InterPro" id="IPR023144">
    <property type="entry name" value="Phe_NH3-lyase_shielding_dom_sf"/>
</dbReference>
<dbReference type="NCBIfam" id="TIGR01226">
    <property type="entry name" value="phe_am_lyase"/>
    <property type="match status" value="1"/>
</dbReference>
<dbReference type="PANTHER" id="PTHR10362">
    <property type="entry name" value="HISTIDINE AMMONIA-LYASE"/>
    <property type="match status" value="1"/>
</dbReference>
<dbReference type="Pfam" id="PF00221">
    <property type="entry name" value="Lyase_aromatic"/>
    <property type="match status" value="1"/>
</dbReference>
<dbReference type="SUPFAM" id="SSF48557">
    <property type="entry name" value="L-aspartase-like"/>
    <property type="match status" value="1"/>
</dbReference>
<dbReference type="PROSITE" id="PS00488">
    <property type="entry name" value="PAL_HISTIDASE"/>
    <property type="match status" value="1"/>
</dbReference>
<evidence type="ECO:0000250" key="1">
    <source>
        <dbReference type="UniProtKB" id="Q8GMG0"/>
    </source>
</evidence>
<evidence type="ECO:0000255" key="2">
    <source>
        <dbReference type="PROSITE-ProRule" id="PRU10122"/>
    </source>
</evidence>
<evidence type="ECO:0000269" key="3">
    <source>
    </source>
</evidence>
<evidence type="ECO:0000269" key="4">
    <source>
    </source>
</evidence>
<evidence type="ECO:0000303" key="5">
    <source>
    </source>
</evidence>
<evidence type="ECO:0000305" key="6"/>
<evidence type="ECO:0000305" key="7">
    <source>
    </source>
</evidence>